<name>TX11A_ETHRU</name>
<keyword id="KW-0147">Chitin-binding</keyword>
<keyword id="KW-1015">Disulfide bond</keyword>
<keyword id="KW-0964">Secreted</keyword>
<keyword id="KW-0732">Signal</keyword>
<keyword id="KW-0800">Toxin</keyword>
<organism>
    <name type="scientific">Ethmostigmus rubripes</name>
    <name type="common">Giant centipede</name>
    <dbReference type="NCBI Taxonomy" id="62613"/>
    <lineage>
        <taxon>Eukaryota</taxon>
        <taxon>Metazoa</taxon>
        <taxon>Ecdysozoa</taxon>
        <taxon>Arthropoda</taxon>
        <taxon>Myriapoda</taxon>
        <taxon>Chilopoda</taxon>
        <taxon>Pleurostigmophora</taxon>
        <taxon>Scolopendromorpha</taxon>
        <taxon>Scolopendridae</taxon>
        <taxon>Ethmostigmus</taxon>
    </lineage>
</organism>
<comment type="subcellular location">
    <subcellularLocation>
        <location evidence="5">Secreted</location>
    </subcellularLocation>
</comment>
<comment type="tissue specificity">
    <text evidence="5">Expressed by the venom gland.</text>
</comment>
<comment type="PTM">
    <text evidence="4">Contains 3 disulfide bonds.</text>
</comment>
<comment type="similarity">
    <text evidence="4">Belongs to the scoloptoxin-01 family.</text>
</comment>
<comment type="caution">
    <text evidence="5">All E.rubripes family members described in 'Undeheim et al., 2014' have not been imported into UniProtKB. Please, refer to this paper to access them.</text>
</comment>
<comment type="online information" name="National Center for Biotechnology Information (NCBI)">
    <link uri="https://www.ncbi.nlm.nih.gov/nuccore/GASI01000092"/>
</comment>
<evidence type="ECO:0000255" key="1"/>
<evidence type="ECO:0000255" key="2">
    <source>
        <dbReference type="PROSITE-ProRule" id="PRU00144"/>
    </source>
</evidence>
<evidence type="ECO:0000303" key="3">
    <source>
    </source>
</evidence>
<evidence type="ECO:0000305" key="4"/>
<evidence type="ECO:0000305" key="5">
    <source>
    </source>
</evidence>
<accession>P0DPW4</accession>
<feature type="signal peptide" evidence="1">
    <location>
        <begin position="1"/>
        <end position="22"/>
    </location>
</feature>
<feature type="chain" id="PRO_0000446688" description="U-scoloptoxin(01)-Er1a" evidence="4">
    <location>
        <begin position="23"/>
        <end position="119"/>
    </location>
</feature>
<feature type="domain" description="Chitin-binding type-2" evidence="2">
    <location>
        <begin position="39"/>
        <end position="97"/>
    </location>
</feature>
<feature type="disulfide bond" evidence="2">
    <location>
        <begin position="74"/>
        <end position="87"/>
    </location>
</feature>
<proteinExistence type="inferred from homology"/>
<dbReference type="SMR" id="P0DPW4"/>
<dbReference type="GO" id="GO:0005576">
    <property type="term" value="C:extracellular region"/>
    <property type="evidence" value="ECO:0007669"/>
    <property type="project" value="UniProtKB-SubCell"/>
</dbReference>
<dbReference type="GO" id="GO:0008061">
    <property type="term" value="F:chitin binding"/>
    <property type="evidence" value="ECO:0007669"/>
    <property type="project" value="UniProtKB-KW"/>
</dbReference>
<dbReference type="GO" id="GO:0090729">
    <property type="term" value="F:toxin activity"/>
    <property type="evidence" value="ECO:0007669"/>
    <property type="project" value="UniProtKB-KW"/>
</dbReference>
<dbReference type="Gene3D" id="2.170.140.10">
    <property type="entry name" value="Chitin binding domain"/>
    <property type="match status" value="1"/>
</dbReference>
<dbReference type="InterPro" id="IPR002557">
    <property type="entry name" value="Chitin-bd_dom"/>
</dbReference>
<dbReference type="InterPro" id="IPR036508">
    <property type="entry name" value="Chitin-bd_dom_sf"/>
</dbReference>
<dbReference type="InterPro" id="IPR052976">
    <property type="entry name" value="Scoloptoxin-like"/>
</dbReference>
<dbReference type="PANTHER" id="PTHR22933:SF31">
    <property type="entry name" value="FI18007P1"/>
    <property type="match status" value="1"/>
</dbReference>
<dbReference type="PANTHER" id="PTHR22933">
    <property type="entry name" value="FI18007P1-RELATED"/>
    <property type="match status" value="1"/>
</dbReference>
<dbReference type="Pfam" id="PF01607">
    <property type="entry name" value="CBM_14"/>
    <property type="match status" value="1"/>
</dbReference>
<dbReference type="SMART" id="SM00494">
    <property type="entry name" value="ChtBD2"/>
    <property type="match status" value="1"/>
</dbReference>
<dbReference type="SUPFAM" id="SSF57625">
    <property type="entry name" value="Invertebrate chitin-binding proteins"/>
    <property type="match status" value="1"/>
</dbReference>
<dbReference type="PROSITE" id="PS50940">
    <property type="entry name" value="CHIT_BIND_II"/>
    <property type="match status" value="1"/>
</dbReference>
<protein>
    <recommendedName>
        <fullName evidence="3">U-scoloptoxin(01)-Er1a</fullName>
        <shortName evidence="3">U-SLPTX(01)-Er1a</shortName>
    </recommendedName>
</protein>
<reference key="1">
    <citation type="journal article" date="2014" name="Mol. Biol. Evol.">
        <title>Clawing through evolution: toxin diversification and convergence in the ancient lineage Chilopoda (centipedes).</title>
        <authorList>
            <person name="Undheim E.A."/>
            <person name="Jones A."/>
            <person name="Clauser K.R."/>
            <person name="Holland J.W."/>
            <person name="Pineda S.S."/>
            <person name="King G.F."/>
            <person name="Fry B.G."/>
        </authorList>
    </citation>
    <scope>NUCLEOTIDE SEQUENCE [MRNA]</scope>
    <scope>NOMENCLATURE</scope>
    <source>
        <tissue>Venom gland</tissue>
    </source>
</reference>
<sequence>MEIHSNIILLLLIALFAIFVKMEDEEKPPNLTRMPEGVNFACSGKKPGFYADEGFDCQVYHMCSPEGQLTTYLCGPGTIFNQKKLVCDLPTNYNCADAAKDAEEANANVFKTQSSTSEP</sequence>